<dbReference type="EC" id="1.97.1.12" evidence="1"/>
<dbReference type="EMBL" id="AB001684">
    <property type="protein sequence ID" value="BAA57928.1"/>
    <property type="molecule type" value="Genomic_DNA"/>
</dbReference>
<dbReference type="PIR" id="T07280">
    <property type="entry name" value="T07280"/>
</dbReference>
<dbReference type="RefSeq" id="NP_045852.1">
    <property type="nucleotide sequence ID" value="NC_001865.1"/>
</dbReference>
<dbReference type="SMR" id="P56342"/>
<dbReference type="GeneID" id="809130"/>
<dbReference type="OrthoDB" id="15at2759"/>
<dbReference type="GO" id="GO:0009535">
    <property type="term" value="C:chloroplast thylakoid membrane"/>
    <property type="evidence" value="ECO:0007669"/>
    <property type="project" value="UniProtKB-SubCell"/>
</dbReference>
<dbReference type="GO" id="GO:0009522">
    <property type="term" value="C:photosystem I"/>
    <property type="evidence" value="ECO:0007669"/>
    <property type="project" value="UniProtKB-KW"/>
</dbReference>
<dbReference type="GO" id="GO:0051539">
    <property type="term" value="F:4 iron, 4 sulfur cluster binding"/>
    <property type="evidence" value="ECO:0007669"/>
    <property type="project" value="UniProtKB-KW"/>
</dbReference>
<dbReference type="GO" id="GO:0016168">
    <property type="term" value="F:chlorophyll binding"/>
    <property type="evidence" value="ECO:0007669"/>
    <property type="project" value="UniProtKB-KW"/>
</dbReference>
<dbReference type="GO" id="GO:0009055">
    <property type="term" value="F:electron transfer activity"/>
    <property type="evidence" value="ECO:0007669"/>
    <property type="project" value="UniProtKB-UniRule"/>
</dbReference>
<dbReference type="GO" id="GO:0000287">
    <property type="term" value="F:magnesium ion binding"/>
    <property type="evidence" value="ECO:0007669"/>
    <property type="project" value="UniProtKB-UniRule"/>
</dbReference>
<dbReference type="GO" id="GO:0016491">
    <property type="term" value="F:oxidoreductase activity"/>
    <property type="evidence" value="ECO:0007669"/>
    <property type="project" value="UniProtKB-KW"/>
</dbReference>
<dbReference type="GO" id="GO:0015979">
    <property type="term" value="P:photosynthesis"/>
    <property type="evidence" value="ECO:0007669"/>
    <property type="project" value="UniProtKB-UniRule"/>
</dbReference>
<dbReference type="FunFam" id="1.20.1130.10:FF:000001">
    <property type="entry name" value="Photosystem I P700 chlorophyll a apoprotein A2"/>
    <property type="match status" value="1"/>
</dbReference>
<dbReference type="Gene3D" id="1.20.1130.10">
    <property type="entry name" value="Photosystem I PsaA/PsaB"/>
    <property type="match status" value="1"/>
</dbReference>
<dbReference type="HAMAP" id="MF_00482">
    <property type="entry name" value="PSI_PsaB"/>
    <property type="match status" value="1"/>
</dbReference>
<dbReference type="InterPro" id="IPR001280">
    <property type="entry name" value="PSI_PsaA/B"/>
</dbReference>
<dbReference type="InterPro" id="IPR020586">
    <property type="entry name" value="PSI_PsaA/B_CS"/>
</dbReference>
<dbReference type="InterPro" id="IPR036408">
    <property type="entry name" value="PSI_PsaA/B_sf"/>
</dbReference>
<dbReference type="InterPro" id="IPR006244">
    <property type="entry name" value="PSI_PsaB"/>
</dbReference>
<dbReference type="NCBIfam" id="TIGR01336">
    <property type="entry name" value="psaB"/>
    <property type="match status" value="1"/>
</dbReference>
<dbReference type="PANTHER" id="PTHR30128">
    <property type="entry name" value="OUTER MEMBRANE PROTEIN, OMPA-RELATED"/>
    <property type="match status" value="1"/>
</dbReference>
<dbReference type="PANTHER" id="PTHR30128:SF19">
    <property type="entry name" value="PHOTOSYSTEM I P700 CHLOROPHYLL A APOPROTEIN A1-RELATED"/>
    <property type="match status" value="1"/>
</dbReference>
<dbReference type="Pfam" id="PF00223">
    <property type="entry name" value="PsaA_PsaB"/>
    <property type="match status" value="1"/>
</dbReference>
<dbReference type="PIRSF" id="PIRSF002905">
    <property type="entry name" value="PSI_A"/>
    <property type="match status" value="1"/>
</dbReference>
<dbReference type="PRINTS" id="PR00257">
    <property type="entry name" value="PHOTSYSPSAAB"/>
</dbReference>
<dbReference type="SUPFAM" id="SSF81558">
    <property type="entry name" value="Photosystem I subunits PsaA/PsaB"/>
    <property type="match status" value="1"/>
</dbReference>
<dbReference type="PROSITE" id="PS00419">
    <property type="entry name" value="PHOTOSYSTEM_I_PSAAB"/>
    <property type="match status" value="1"/>
</dbReference>
<gene>
    <name evidence="1" type="primary">psaB</name>
</gene>
<comment type="function">
    <text evidence="1">PsaA and PsaB bind P700, the primary electron donor of photosystem I (PSI), as well as the electron acceptors A0, A1 and FX. PSI is a plastocyanin/cytochrome c6-ferredoxin oxidoreductase, converting photonic excitation into a charge separation, which transfers an electron from the donor P700 chlorophyll pair to the spectroscopically characterized acceptors A0, A1, FX, FA and FB in turn. Oxidized P700 is reduced on the lumenal side of the thylakoid membrane by plastocyanin or cytochrome c6.</text>
</comment>
<comment type="catalytic activity">
    <reaction evidence="1">
        <text>reduced [plastocyanin] + hnu + oxidized [2Fe-2S]-[ferredoxin] = oxidized [plastocyanin] + reduced [2Fe-2S]-[ferredoxin]</text>
        <dbReference type="Rhea" id="RHEA:30407"/>
        <dbReference type="Rhea" id="RHEA-COMP:10000"/>
        <dbReference type="Rhea" id="RHEA-COMP:10001"/>
        <dbReference type="Rhea" id="RHEA-COMP:10039"/>
        <dbReference type="Rhea" id="RHEA-COMP:10040"/>
        <dbReference type="ChEBI" id="CHEBI:29036"/>
        <dbReference type="ChEBI" id="CHEBI:30212"/>
        <dbReference type="ChEBI" id="CHEBI:33737"/>
        <dbReference type="ChEBI" id="CHEBI:33738"/>
        <dbReference type="ChEBI" id="CHEBI:49552"/>
        <dbReference type="EC" id="1.97.1.12"/>
    </reaction>
</comment>
<comment type="cofactor">
    <text evidence="1">P700 is a chlorophyll a/chlorophyll a' dimer, A0 is one or more chlorophyll a, A1 is one or both phylloquinones and FX is a shared 4Fe-4S iron-sulfur center.</text>
</comment>
<comment type="subunit">
    <text evidence="1">The PsaA/B heterodimer binds the P700 chlorophyll special pair and subsequent electron acceptors. PSI consists of a core antenna complex that captures photons, and an electron transfer chain that converts photonic excitation into a charge separation. The eukaryotic PSI reaction center is composed of at least 11 subunits.</text>
</comment>
<comment type="subcellular location">
    <subcellularLocation>
        <location evidence="1">Plastid</location>
        <location evidence="1">Chloroplast thylakoid membrane</location>
        <topology evidence="1">Multi-pass membrane protein</topology>
    </subcellularLocation>
</comment>
<comment type="similarity">
    <text evidence="1">Belongs to the PsaA/PsaB family.</text>
</comment>
<reference key="1">
    <citation type="journal article" date="1997" name="Proc. Natl. Acad. Sci. U.S.A.">
        <title>Complete nucleotide sequence of the chloroplast genome from the green alga Chlorella vulgaris: the existence of genes possibly involved in chloroplast division.</title>
        <authorList>
            <person name="Wakasugi T."/>
            <person name="Nagai T."/>
            <person name="Kapoor M."/>
            <person name="Sugita M."/>
            <person name="Ito M."/>
            <person name="Ito S."/>
            <person name="Tsudzuki J."/>
            <person name="Nakashima K."/>
            <person name="Tsudzuki T."/>
            <person name="Suzuki Y."/>
            <person name="Hamada A."/>
            <person name="Ohta T."/>
            <person name="Inamura A."/>
            <person name="Yoshinaga K."/>
            <person name="Sugiura M."/>
        </authorList>
    </citation>
    <scope>NUCLEOTIDE SEQUENCE [LARGE SCALE GENOMIC DNA]</scope>
    <source>
        <strain>IAM C-27 / Tamiya</strain>
    </source>
</reference>
<evidence type="ECO:0000255" key="1">
    <source>
        <dbReference type="HAMAP-Rule" id="MF_00482"/>
    </source>
</evidence>
<proteinExistence type="inferred from homology"/>
<sequence>MATKFPKFSQALAQDPTTRRLWFGIATAHDFESHDGMTEERLYQKIFASHFGQLAIIFLWTSGNLFHVAWQGNFEQWVQDPLHIRPIAHAIWDPHFGQAAVEAFTRGGASGPVNISTSGVYQWWYTIGIRTNQELYVGSIFLLVLAGLFLFAGWLHLQPSFQPALSWFKNAESRLNHHLAGLFGVSSLAWTGHLVHVAIPESRGQHVGWDNFLTVLPHPAGLTPFFTGNWAAYAENPDSLSQLFGTGEGSGTAILTFLGGFHPQTQSLWLTDMAHHHLAIAVVFILAGHMYRTIFGIGHSMREILEAQTPPSGRLGAGHKGLYDTVNNSLHFQLGLALASVGTICSLVAQHMYSLPPYAFLAQDFTTQASLYTHHQYIAGFIMCGAFAHGAIFFVRDYDPEANRGNVLARVLDHKEAIISHLSWVSLFLGFHTLGLYVHNDVVQAFGTPEKQILIEPVFAQWIQAAHGKTVYGFDFLLSSATSAPSLAGQSLWLPGWLQGINSDTNSLFLTIGPGDFLVHHAIALGLHTTTLILVKGALDARGSKLMPDKKDFGYSFPCDGPGRGGTCDISAWDAFYLAVFWMLNTIGWVTFYFHWKHLGIWQGNVNQFNESSTYLMGWLRDYLWLNSSQLINGYNPFGMNSLSVWAWMFLFGHLIYATGFMFLISWRGYWQELIETLAWAHERTPLANLVRWRDKPVALSIVQARLVGLTHFSVGYVLTYAAFLIASTSGKFG</sequence>
<protein>
    <recommendedName>
        <fullName evidence="1">Photosystem I P700 chlorophyll a apoprotein A2</fullName>
        <ecNumber evidence="1">1.97.1.12</ecNumber>
    </recommendedName>
    <alternativeName>
        <fullName evidence="1">PSI-B</fullName>
    </alternativeName>
    <alternativeName>
        <fullName evidence="1">PsaB</fullName>
    </alternativeName>
</protein>
<accession>P56342</accession>
<geneLocation type="chloroplast"/>
<feature type="chain" id="PRO_0000088610" description="Photosystem I P700 chlorophyll a apoprotein A2">
    <location>
        <begin position="1"/>
        <end position="734"/>
    </location>
</feature>
<feature type="transmembrane region" description="Helical; Name=I" evidence="1">
    <location>
        <begin position="46"/>
        <end position="69"/>
    </location>
</feature>
<feature type="transmembrane region" description="Helical; Name=II" evidence="1">
    <location>
        <begin position="135"/>
        <end position="158"/>
    </location>
</feature>
<feature type="transmembrane region" description="Helical; Name=III" evidence="1">
    <location>
        <begin position="175"/>
        <end position="199"/>
    </location>
</feature>
<feature type="transmembrane region" description="Helical; Name=IV" evidence="1">
    <location>
        <begin position="273"/>
        <end position="291"/>
    </location>
</feature>
<feature type="transmembrane region" description="Helical; Name=V" evidence="1">
    <location>
        <begin position="330"/>
        <end position="353"/>
    </location>
</feature>
<feature type="transmembrane region" description="Helical; Name=VI" evidence="1">
    <location>
        <begin position="369"/>
        <end position="395"/>
    </location>
</feature>
<feature type="transmembrane region" description="Helical; Name=VII" evidence="1">
    <location>
        <begin position="417"/>
        <end position="439"/>
    </location>
</feature>
<feature type="transmembrane region" description="Helical; Name=VIII" evidence="1">
    <location>
        <begin position="517"/>
        <end position="535"/>
    </location>
</feature>
<feature type="transmembrane region" description="Helical; Name=IX" evidence="1">
    <location>
        <begin position="575"/>
        <end position="596"/>
    </location>
</feature>
<feature type="transmembrane region" description="Helical; Name=X" evidence="1">
    <location>
        <begin position="643"/>
        <end position="665"/>
    </location>
</feature>
<feature type="transmembrane region" description="Helical; Name=XI" evidence="1">
    <location>
        <begin position="707"/>
        <end position="727"/>
    </location>
</feature>
<feature type="binding site" evidence="1">
    <location>
        <position position="559"/>
    </location>
    <ligand>
        <name>[4Fe-4S] cluster</name>
        <dbReference type="ChEBI" id="CHEBI:49883"/>
        <note>ligand shared between dimeric partners</note>
    </ligand>
</feature>
<feature type="binding site" evidence="1">
    <location>
        <position position="568"/>
    </location>
    <ligand>
        <name>[4Fe-4S] cluster</name>
        <dbReference type="ChEBI" id="CHEBI:49883"/>
        <note>ligand shared between dimeric partners</note>
    </ligand>
</feature>
<feature type="binding site" description="axial binding residue" evidence="1">
    <location>
        <position position="654"/>
    </location>
    <ligand>
        <name>chlorophyll a</name>
        <dbReference type="ChEBI" id="CHEBI:58416"/>
        <label>B1</label>
    </ligand>
    <ligandPart>
        <name>Mg</name>
        <dbReference type="ChEBI" id="CHEBI:25107"/>
    </ligandPart>
</feature>
<feature type="binding site" description="axial binding residue" evidence="1">
    <location>
        <position position="662"/>
    </location>
    <ligand>
        <name>chlorophyll a</name>
        <dbReference type="ChEBI" id="CHEBI:58416"/>
        <label>B3</label>
    </ligand>
    <ligandPart>
        <name>Mg</name>
        <dbReference type="ChEBI" id="CHEBI:25107"/>
    </ligandPart>
</feature>
<feature type="binding site" evidence="1">
    <location>
        <position position="670"/>
    </location>
    <ligand>
        <name>chlorophyll a</name>
        <dbReference type="ChEBI" id="CHEBI:58416"/>
        <label>B3</label>
    </ligand>
</feature>
<feature type="binding site" evidence="1">
    <location>
        <position position="671"/>
    </location>
    <ligand>
        <name>phylloquinone</name>
        <dbReference type="ChEBI" id="CHEBI:18067"/>
        <label>B</label>
    </ligand>
</feature>
<keyword id="KW-0004">4Fe-4S</keyword>
<keyword id="KW-0148">Chlorophyll</keyword>
<keyword id="KW-0150">Chloroplast</keyword>
<keyword id="KW-0157">Chromophore</keyword>
<keyword id="KW-0249">Electron transport</keyword>
<keyword id="KW-0408">Iron</keyword>
<keyword id="KW-0411">Iron-sulfur</keyword>
<keyword id="KW-0460">Magnesium</keyword>
<keyword id="KW-0472">Membrane</keyword>
<keyword id="KW-0479">Metal-binding</keyword>
<keyword id="KW-0560">Oxidoreductase</keyword>
<keyword id="KW-0602">Photosynthesis</keyword>
<keyword id="KW-0603">Photosystem I</keyword>
<keyword id="KW-0934">Plastid</keyword>
<keyword id="KW-0793">Thylakoid</keyword>
<keyword id="KW-0812">Transmembrane</keyword>
<keyword id="KW-1133">Transmembrane helix</keyword>
<keyword id="KW-0813">Transport</keyword>
<name>PSAB_CHLVU</name>
<organism>
    <name type="scientific">Chlorella vulgaris</name>
    <name type="common">Green alga</name>
    <dbReference type="NCBI Taxonomy" id="3077"/>
    <lineage>
        <taxon>Eukaryota</taxon>
        <taxon>Viridiplantae</taxon>
        <taxon>Chlorophyta</taxon>
        <taxon>core chlorophytes</taxon>
        <taxon>Trebouxiophyceae</taxon>
        <taxon>Chlorellales</taxon>
        <taxon>Chlorellaceae</taxon>
        <taxon>Chlorella clade</taxon>
        <taxon>Chlorella</taxon>
    </lineage>
</organism>